<feature type="chain" id="PRO_0000345718" description="tRNA modification GTPase MnmE">
    <location>
        <begin position="1"/>
        <end position="436"/>
    </location>
</feature>
<feature type="domain" description="TrmE-type G">
    <location>
        <begin position="214"/>
        <end position="360"/>
    </location>
</feature>
<feature type="binding site" evidence="1">
    <location>
        <position position="20"/>
    </location>
    <ligand>
        <name>(6S)-5-formyl-5,6,7,8-tetrahydrofolate</name>
        <dbReference type="ChEBI" id="CHEBI:57457"/>
    </ligand>
</feature>
<feature type="binding site" evidence="1">
    <location>
        <position position="77"/>
    </location>
    <ligand>
        <name>(6S)-5-formyl-5,6,7,8-tetrahydrofolate</name>
        <dbReference type="ChEBI" id="CHEBI:57457"/>
    </ligand>
</feature>
<feature type="binding site" evidence="1">
    <location>
        <position position="117"/>
    </location>
    <ligand>
        <name>(6S)-5-formyl-5,6,7,8-tetrahydrofolate</name>
        <dbReference type="ChEBI" id="CHEBI:57457"/>
    </ligand>
</feature>
<feature type="binding site" evidence="1">
    <location>
        <begin position="224"/>
        <end position="229"/>
    </location>
    <ligand>
        <name>GTP</name>
        <dbReference type="ChEBI" id="CHEBI:37565"/>
    </ligand>
</feature>
<feature type="binding site" evidence="1">
    <location>
        <position position="228"/>
    </location>
    <ligand>
        <name>Mg(2+)</name>
        <dbReference type="ChEBI" id="CHEBI:18420"/>
    </ligand>
</feature>
<feature type="binding site" evidence="1">
    <location>
        <begin position="243"/>
        <end position="249"/>
    </location>
    <ligand>
        <name>GTP</name>
        <dbReference type="ChEBI" id="CHEBI:37565"/>
    </ligand>
</feature>
<feature type="binding site" evidence="1">
    <location>
        <position position="249"/>
    </location>
    <ligand>
        <name>Mg(2+)</name>
        <dbReference type="ChEBI" id="CHEBI:18420"/>
    </ligand>
</feature>
<feature type="binding site" evidence="1">
    <location>
        <begin position="268"/>
        <end position="271"/>
    </location>
    <ligand>
        <name>GTP</name>
        <dbReference type="ChEBI" id="CHEBI:37565"/>
    </ligand>
</feature>
<feature type="binding site" evidence="1">
    <location>
        <position position="436"/>
    </location>
    <ligand>
        <name>(6S)-5-formyl-5,6,7,8-tetrahydrofolate</name>
        <dbReference type="ChEBI" id="CHEBI:57457"/>
    </ligand>
</feature>
<comment type="function">
    <text evidence="1">Exhibits a very high intrinsic GTPase hydrolysis rate. Involved in the addition of a carboxymethylaminomethyl (cmnm) group at the wobble position (U34) of certain tRNAs, forming tRNA-cmnm(5)s(2)U34.</text>
</comment>
<comment type="cofactor">
    <cofactor evidence="1">
        <name>K(+)</name>
        <dbReference type="ChEBI" id="CHEBI:29103"/>
    </cofactor>
    <text evidence="1">Binds 1 potassium ion per subunit.</text>
</comment>
<comment type="subunit">
    <text evidence="1">Homodimer. Heterotetramer of two MnmE and two MnmG subunits.</text>
</comment>
<comment type="subcellular location">
    <subcellularLocation>
        <location evidence="1">Cytoplasm</location>
    </subcellularLocation>
</comment>
<comment type="similarity">
    <text evidence="1">Belongs to the TRAFAC class TrmE-Era-EngA-EngB-Septin-like GTPase superfamily. TrmE GTPase family.</text>
</comment>
<protein>
    <recommendedName>
        <fullName evidence="1">tRNA modification GTPase MnmE</fullName>
        <ecNumber evidence="1">3.6.-.-</ecNumber>
    </recommendedName>
</protein>
<organism>
    <name type="scientific">Bartonella quintana (strain Toulouse)</name>
    <name type="common">Rochalimaea quintana</name>
    <dbReference type="NCBI Taxonomy" id="283165"/>
    <lineage>
        <taxon>Bacteria</taxon>
        <taxon>Pseudomonadati</taxon>
        <taxon>Pseudomonadota</taxon>
        <taxon>Alphaproteobacteria</taxon>
        <taxon>Hyphomicrobiales</taxon>
        <taxon>Bartonellaceae</taxon>
        <taxon>Bartonella</taxon>
    </lineage>
</organism>
<evidence type="ECO:0000255" key="1">
    <source>
        <dbReference type="HAMAP-Rule" id="MF_00379"/>
    </source>
</evidence>
<gene>
    <name evidence="1" type="primary">mnmE</name>
    <name evidence="1" type="synonym">trmE</name>
    <name type="ordered locus">BQ13570</name>
</gene>
<dbReference type="EC" id="3.6.-.-" evidence="1"/>
<dbReference type="EMBL" id="BX897700">
    <property type="protein sequence ID" value="CAF26815.1"/>
    <property type="molecule type" value="Genomic_DNA"/>
</dbReference>
<dbReference type="RefSeq" id="WP_011179969.1">
    <property type="nucleotide sequence ID" value="NC_005955.1"/>
</dbReference>
<dbReference type="SMR" id="Q6FYB8"/>
<dbReference type="KEGG" id="bqu:BQ13570"/>
<dbReference type="eggNOG" id="COG0486">
    <property type="taxonomic scope" value="Bacteria"/>
</dbReference>
<dbReference type="HOGENOM" id="CLU_019624_3_1_5"/>
<dbReference type="OrthoDB" id="9805918at2"/>
<dbReference type="Proteomes" id="UP000000597">
    <property type="component" value="Chromosome"/>
</dbReference>
<dbReference type="GO" id="GO:0005737">
    <property type="term" value="C:cytoplasm"/>
    <property type="evidence" value="ECO:0007669"/>
    <property type="project" value="UniProtKB-SubCell"/>
</dbReference>
<dbReference type="GO" id="GO:0005525">
    <property type="term" value="F:GTP binding"/>
    <property type="evidence" value="ECO:0007669"/>
    <property type="project" value="UniProtKB-UniRule"/>
</dbReference>
<dbReference type="GO" id="GO:0003924">
    <property type="term" value="F:GTPase activity"/>
    <property type="evidence" value="ECO:0007669"/>
    <property type="project" value="UniProtKB-UniRule"/>
</dbReference>
<dbReference type="GO" id="GO:0046872">
    <property type="term" value="F:metal ion binding"/>
    <property type="evidence" value="ECO:0007669"/>
    <property type="project" value="UniProtKB-KW"/>
</dbReference>
<dbReference type="GO" id="GO:0030488">
    <property type="term" value="P:tRNA methylation"/>
    <property type="evidence" value="ECO:0007669"/>
    <property type="project" value="TreeGrafter"/>
</dbReference>
<dbReference type="GO" id="GO:0002098">
    <property type="term" value="P:tRNA wobble uridine modification"/>
    <property type="evidence" value="ECO:0007669"/>
    <property type="project" value="TreeGrafter"/>
</dbReference>
<dbReference type="CDD" id="cd04164">
    <property type="entry name" value="trmE"/>
    <property type="match status" value="1"/>
</dbReference>
<dbReference type="CDD" id="cd14858">
    <property type="entry name" value="TrmE_N"/>
    <property type="match status" value="1"/>
</dbReference>
<dbReference type="FunFam" id="3.30.1360.120:FF:000007">
    <property type="entry name" value="tRNA modification GTPase GTPBP3, mitochondrial"/>
    <property type="match status" value="1"/>
</dbReference>
<dbReference type="Gene3D" id="3.40.50.300">
    <property type="entry name" value="P-loop containing nucleotide triphosphate hydrolases"/>
    <property type="match status" value="1"/>
</dbReference>
<dbReference type="Gene3D" id="3.30.1360.120">
    <property type="entry name" value="Probable tRNA modification gtpase trme, domain 1"/>
    <property type="match status" value="1"/>
</dbReference>
<dbReference type="Gene3D" id="1.20.120.430">
    <property type="entry name" value="tRNA modification GTPase MnmE domain 2"/>
    <property type="match status" value="1"/>
</dbReference>
<dbReference type="HAMAP" id="MF_00379">
    <property type="entry name" value="GTPase_MnmE"/>
    <property type="match status" value="1"/>
</dbReference>
<dbReference type="InterPro" id="IPR031168">
    <property type="entry name" value="G_TrmE"/>
</dbReference>
<dbReference type="InterPro" id="IPR006073">
    <property type="entry name" value="GTP-bd"/>
</dbReference>
<dbReference type="InterPro" id="IPR018948">
    <property type="entry name" value="GTP-bd_TrmE_N"/>
</dbReference>
<dbReference type="InterPro" id="IPR004520">
    <property type="entry name" value="GTPase_MnmE"/>
</dbReference>
<dbReference type="InterPro" id="IPR027368">
    <property type="entry name" value="MnmE_dom2"/>
</dbReference>
<dbReference type="InterPro" id="IPR025867">
    <property type="entry name" value="MnmE_helical"/>
</dbReference>
<dbReference type="InterPro" id="IPR027417">
    <property type="entry name" value="P-loop_NTPase"/>
</dbReference>
<dbReference type="InterPro" id="IPR005225">
    <property type="entry name" value="Small_GTP-bd"/>
</dbReference>
<dbReference type="InterPro" id="IPR027266">
    <property type="entry name" value="TrmE/GcvT_dom1"/>
</dbReference>
<dbReference type="NCBIfam" id="TIGR00450">
    <property type="entry name" value="mnmE_trmE_thdF"/>
    <property type="match status" value="1"/>
</dbReference>
<dbReference type="NCBIfam" id="NF003661">
    <property type="entry name" value="PRK05291.1-3"/>
    <property type="match status" value="1"/>
</dbReference>
<dbReference type="NCBIfam" id="TIGR00231">
    <property type="entry name" value="small_GTP"/>
    <property type="match status" value="1"/>
</dbReference>
<dbReference type="PANTHER" id="PTHR42714">
    <property type="entry name" value="TRNA MODIFICATION GTPASE GTPBP3"/>
    <property type="match status" value="1"/>
</dbReference>
<dbReference type="PANTHER" id="PTHR42714:SF2">
    <property type="entry name" value="TRNA MODIFICATION GTPASE GTPBP3, MITOCHONDRIAL"/>
    <property type="match status" value="1"/>
</dbReference>
<dbReference type="Pfam" id="PF01926">
    <property type="entry name" value="MMR_HSR1"/>
    <property type="match status" value="1"/>
</dbReference>
<dbReference type="Pfam" id="PF12631">
    <property type="entry name" value="MnmE_helical"/>
    <property type="match status" value="1"/>
</dbReference>
<dbReference type="Pfam" id="PF10396">
    <property type="entry name" value="TrmE_N"/>
    <property type="match status" value="1"/>
</dbReference>
<dbReference type="SUPFAM" id="SSF52540">
    <property type="entry name" value="P-loop containing nucleoside triphosphate hydrolases"/>
    <property type="match status" value="1"/>
</dbReference>
<dbReference type="SUPFAM" id="SSF116878">
    <property type="entry name" value="TrmE connector domain"/>
    <property type="match status" value="1"/>
</dbReference>
<dbReference type="PROSITE" id="PS51709">
    <property type="entry name" value="G_TRME"/>
    <property type="match status" value="1"/>
</dbReference>
<accession>Q6FYB8</accession>
<sequence>MDTIFAVSSGLLPSGVAVIRLSGPHVINIVKALCGHLPKARLMHYGNLTARDGSFLDSALTVFFPAPHSFTGEDCAEFHLHGSKAVVNRFLDELSTFDGCRSAEAGEFSRRAFMEGKLDLIQAESLADLIEAETESQRRLAVMGTSGRLTTLYRDWRNRLIKARAFIEAELDFSDEADVSDLISDKVWEDVEELCISIRDHIAQGERANILRDGLKIVIAGAPNSGKSSIMNRLAGKSVAIVMEEAGTTRDALEIRLVLGGLPVFLTDTAGLRETENKIEQLGIEIAKQHIVDADLVILVYDMGNPKEVNLPETSAEIWHVGNKLDLYEEENKKTWTIQFSALTGLNFDYFIKELESFCLRRVSEIGNLFPARKRQLQLLKEAIREIEASINYRSLDLSLHAEHLRCASVFLGKITGDIDVEDLLDIIFSEFCIGK</sequence>
<proteinExistence type="inferred from homology"/>
<reference key="1">
    <citation type="journal article" date="2004" name="Proc. Natl. Acad. Sci. U.S.A.">
        <title>The louse-borne human pathogen Bartonella quintana is a genomic derivative of the zoonotic agent Bartonella henselae.</title>
        <authorList>
            <person name="Alsmark U.C.M."/>
            <person name="Frank A.C."/>
            <person name="Karlberg E.O."/>
            <person name="Legault B.-A."/>
            <person name="Ardell D.H."/>
            <person name="Canbaeck B."/>
            <person name="Eriksson A.-S."/>
            <person name="Naeslund A.K."/>
            <person name="Handley S.A."/>
            <person name="Huvet M."/>
            <person name="La Scola B."/>
            <person name="Holmberg M."/>
            <person name="Andersson S.G.E."/>
        </authorList>
    </citation>
    <scope>NUCLEOTIDE SEQUENCE [LARGE SCALE GENOMIC DNA]</scope>
    <source>
        <strain>Toulouse</strain>
    </source>
</reference>
<keyword id="KW-0963">Cytoplasm</keyword>
<keyword id="KW-0342">GTP-binding</keyword>
<keyword id="KW-0378">Hydrolase</keyword>
<keyword id="KW-0460">Magnesium</keyword>
<keyword id="KW-0479">Metal-binding</keyword>
<keyword id="KW-0547">Nucleotide-binding</keyword>
<keyword id="KW-0630">Potassium</keyword>
<keyword id="KW-0819">tRNA processing</keyword>
<name>MNME_BARQU</name>